<feature type="chain" id="PRO_0000203502" description="Transposon Ty4-J Gag-Pol polyprotein">
    <location>
        <begin position="1"/>
        <end position="1803"/>
    </location>
</feature>
<feature type="domain" description="Integrase catalytic" evidence="3">
    <location>
        <begin position="620"/>
        <end position="787"/>
    </location>
</feature>
<feature type="domain" description="Reverse transcriptase Ty1/copia-type">
    <location>
        <begin position="1376"/>
        <end position="1511"/>
    </location>
</feature>
<feature type="domain" description="RNase H Ty1/copia-type">
    <location>
        <begin position="1645"/>
        <end position="1791"/>
    </location>
</feature>
<feature type="region of interest" description="Ty4 protease">
    <location>
        <begin position="382"/>
        <end position="502"/>
    </location>
</feature>
<feature type="region of interest" description="Integrase-type zinc finger-like">
    <location>
        <begin position="540"/>
        <end position="600"/>
    </location>
</feature>
<feature type="region of interest" description="Disordered" evidence="4">
    <location>
        <begin position="1224"/>
        <end position="1250"/>
    </location>
</feature>
<feature type="coiled-coil region" evidence="2">
    <location>
        <begin position="39"/>
        <end position="115"/>
    </location>
</feature>
<feature type="active site" description="For protease activity; shared with dimeric partner" evidence="1">
    <location>
        <position position="415"/>
    </location>
</feature>
<feature type="binding site" evidence="3">
    <location>
        <position position="631"/>
    </location>
    <ligand>
        <name>Mg(2+)</name>
        <dbReference type="ChEBI" id="CHEBI:18420"/>
        <label>1</label>
        <note>catalytic; for integrase activity</note>
    </ligand>
</feature>
<feature type="binding site" evidence="3">
    <location>
        <position position="696"/>
    </location>
    <ligand>
        <name>Mg(2+)</name>
        <dbReference type="ChEBI" id="CHEBI:18420"/>
        <label>1</label>
        <note>catalytic; for integrase activity</note>
    </ligand>
</feature>
<feature type="binding site" evidence="3">
    <location>
        <position position="1384"/>
    </location>
    <ligand>
        <name>Mg(2+)</name>
        <dbReference type="ChEBI" id="CHEBI:18420"/>
        <label>2</label>
        <note>catalytic; for reverse transcriptase activity</note>
    </ligand>
</feature>
<feature type="binding site" evidence="3">
    <location>
        <position position="1463"/>
    </location>
    <ligand>
        <name>Mg(2+)</name>
        <dbReference type="ChEBI" id="CHEBI:18420"/>
        <label>2</label>
        <note>catalytic; for reverse transcriptase activity</note>
    </ligand>
</feature>
<feature type="binding site" evidence="3">
    <location>
        <position position="1464"/>
    </location>
    <ligand>
        <name>Mg(2+)</name>
        <dbReference type="ChEBI" id="CHEBI:18420"/>
        <label>2</label>
        <note>catalytic; for reverse transcriptase activity</note>
    </ligand>
</feature>
<feature type="binding site" evidence="3">
    <location>
        <position position="1645"/>
    </location>
    <ligand>
        <name>Mg(2+)</name>
        <dbReference type="ChEBI" id="CHEBI:18420"/>
        <label>3</label>
        <note>catalytic; for RNase H activity</note>
    </ligand>
</feature>
<feature type="binding site" evidence="3">
    <location>
        <position position="1687"/>
    </location>
    <ligand>
        <name>Mg(2+)</name>
        <dbReference type="ChEBI" id="CHEBI:18420"/>
        <label>3</label>
        <note>catalytic; for RNase H activity</note>
    </ligand>
</feature>
<feature type="binding site" evidence="3">
    <location>
        <position position="1721"/>
    </location>
    <ligand>
        <name>Mg(2+)</name>
        <dbReference type="ChEBI" id="CHEBI:18420"/>
        <label>3</label>
        <note>catalytic; for RNase H activity</note>
    </ligand>
</feature>
<feature type="sequence conflict" description="In Ref. 1; X67284." evidence="5" ref="1">
    <original>V</original>
    <variation>L</variation>
    <location>
        <position position="452"/>
    </location>
</feature>
<feature type="sequence conflict" description="In Ref. 1; X67284." evidence="5" ref="1">
    <original>T</original>
    <variation>A</variation>
    <location>
        <position position="684"/>
    </location>
</feature>
<feature type="sequence conflict" description="In Ref. 1; X67284." evidence="5" ref="1">
    <original>A</original>
    <variation>S</variation>
    <location>
        <position position="920"/>
    </location>
</feature>
<feature type="sequence conflict" description="In Ref. 1; X67284." evidence="5" ref="1">
    <original>S</original>
    <variation>R</variation>
    <location>
        <position position="1020"/>
    </location>
</feature>
<feature type="sequence conflict" description="In Ref. 1; X67284." evidence="5" ref="1">
    <original>Y</original>
    <variation>YLINEVLNTQISVEVQ</variation>
    <location>
        <position position="1803"/>
    </location>
</feature>
<reference key="1">
    <citation type="journal article" date="1992" name="J. Biol. Chem.">
        <title>Ty4, a new retrotransposon from Saccharomyces cerevisiae, flanked by tau-elements.</title>
        <authorList>
            <person name="Janetzky B."/>
            <person name="Lehle L."/>
        </authorList>
    </citation>
    <scope>NUCLEOTIDE SEQUENCE [GENOMIC DNA]</scope>
    <source>
        <strain>ATCC 204508 / S288c</strain>
    </source>
</reference>
<reference key="2">
    <citation type="journal article" date="1996" name="Yeast">
        <title>Sequencing analysis of a 40.2 kb fragment of yeast chromosome X reveals 19 open reading frames including URA2 (5' end), TRK1, PBS2, SPT10, GCD14, RPE1, PHO86, NCA3, ASF1, CCT7, GZF3, two tRNA genes, three remnant delta elements and a Ty4 transposon.</title>
        <authorList>
            <person name="Cziepluch C."/>
            <person name="Kordes E."/>
            <person name="Pujol A."/>
            <person name="Jauniaux J.-C."/>
        </authorList>
    </citation>
    <scope>NUCLEOTIDE SEQUENCE [GENOMIC DNA]</scope>
    <source>
        <strain>ATCC 96604 / S288c / FY1679</strain>
    </source>
</reference>
<reference key="3">
    <citation type="journal article" date="1996" name="EMBO J.">
        <title>Complete nucleotide sequence of Saccharomyces cerevisiae chromosome X.</title>
        <authorList>
            <person name="Galibert F."/>
            <person name="Alexandraki D."/>
            <person name="Baur A."/>
            <person name="Boles E."/>
            <person name="Chalwatzis N."/>
            <person name="Chuat J.-C."/>
            <person name="Coster F."/>
            <person name="Cziepluch C."/>
            <person name="de Haan M."/>
            <person name="Domdey H."/>
            <person name="Durand P."/>
            <person name="Entian K.-D."/>
            <person name="Gatius M."/>
            <person name="Goffeau A."/>
            <person name="Grivell L.A."/>
            <person name="Hennemann A."/>
            <person name="Herbert C.J."/>
            <person name="Heumann K."/>
            <person name="Hilger F."/>
            <person name="Hollenberg C.P."/>
            <person name="Huang M.-E."/>
            <person name="Jacq C."/>
            <person name="Jauniaux J.-C."/>
            <person name="Katsoulou C."/>
            <person name="Kirchrath L."/>
            <person name="Kleine K."/>
            <person name="Kordes E."/>
            <person name="Koetter P."/>
            <person name="Liebl S."/>
            <person name="Louis E.J."/>
            <person name="Manus V."/>
            <person name="Mewes H.-W."/>
            <person name="Miosga T."/>
            <person name="Obermaier B."/>
            <person name="Perea J."/>
            <person name="Pohl T.M."/>
            <person name="Portetelle D."/>
            <person name="Pujol A."/>
            <person name="Purnelle B."/>
            <person name="Ramezani Rad M."/>
            <person name="Rasmussen S.W."/>
            <person name="Rose M."/>
            <person name="Rossau R."/>
            <person name="Schaaff-Gerstenschlaeger I."/>
            <person name="Smits P.H.M."/>
            <person name="Scarcez T."/>
            <person name="Soriano N."/>
            <person name="To Van D."/>
            <person name="Tzermia M."/>
            <person name="Van Broekhoven A."/>
            <person name="Vandenbol M."/>
            <person name="Wedler H."/>
            <person name="von Wettstein D."/>
            <person name="Wambutt R."/>
            <person name="Zagulski M."/>
            <person name="Zollner A."/>
            <person name="Karpfinger-Hartl L."/>
        </authorList>
    </citation>
    <scope>NUCLEOTIDE SEQUENCE [LARGE SCALE GENOMIC DNA]</scope>
    <source>
        <strain>ATCC 204508 / S288c</strain>
    </source>
</reference>
<reference key="4">
    <citation type="journal article" date="2014" name="G3 (Bethesda)">
        <title>The reference genome sequence of Saccharomyces cerevisiae: Then and now.</title>
        <authorList>
            <person name="Engel S.R."/>
            <person name="Dietrich F.S."/>
            <person name="Fisk D.G."/>
            <person name="Binkley G."/>
            <person name="Balakrishnan R."/>
            <person name="Costanzo M.C."/>
            <person name="Dwight S.S."/>
            <person name="Hitz B.C."/>
            <person name="Karra K."/>
            <person name="Nash R.S."/>
            <person name="Weng S."/>
            <person name="Wong E.D."/>
            <person name="Lloyd P."/>
            <person name="Skrzypek M.S."/>
            <person name="Miyasato S.R."/>
            <person name="Simison M."/>
            <person name="Cherry J.M."/>
        </authorList>
    </citation>
    <scope>GENOME REANNOTATION</scope>
    <scope>SEQUENCE REVISION TO 226 AND 240</scope>
    <source>
        <strain>ATCC 204508 / S288c</strain>
    </source>
</reference>
<reference key="5">
    <citation type="journal article" date="1998" name="Genome Res.">
        <title>Transposable elements and genome organization: a comprehensive survey of retrotransposons revealed by the complete Saccharomyces cerevisiae genome sequence.</title>
        <authorList>
            <person name="Kim J.M."/>
            <person name="Vanguri S."/>
            <person name="Boeke J.D."/>
            <person name="Gabriel A."/>
            <person name="Voytas D.F."/>
        </authorList>
    </citation>
    <scope>NOMENCLATURE</scope>
</reference>
<reference key="6">
    <citation type="journal article" date="2005" name="Cytogenet. Genome Res.">
        <title>Happy together: the life and times of Ty retrotransposons and their hosts.</title>
        <authorList>
            <person name="Lesage P."/>
            <person name="Todeschini A.L."/>
        </authorList>
    </citation>
    <scope>REVIEW</scope>
</reference>
<protein>
    <recommendedName>
        <fullName>Transposon Ty4-J Gag-Pol polyprotein</fullName>
    </recommendedName>
    <alternativeName>
        <fullName>TY4A-TY4B</fullName>
    </alternativeName>
    <alternativeName>
        <fullName>Transposon Ty4 TYA-TYB polyprotein</fullName>
    </alternativeName>
    <domain>
        <recommendedName>
            <fullName>Capsid protein</fullName>
            <shortName>CA</shortName>
        </recommendedName>
    </domain>
    <domain>
        <recommendedName>
            <fullName>Ty4 protease</fullName>
            <shortName>PR</shortName>
            <ecNumber>3.4.23.-</ecNumber>
        </recommendedName>
    </domain>
    <domain>
        <recommendedName>
            <fullName>Integrase</fullName>
            <shortName>IN</shortName>
        </recommendedName>
    </domain>
    <domain>
        <recommendedName>
            <fullName>Reverse transcriptase/ribonuclease H</fullName>
            <shortName>RT</shortName>
            <shortName>RT-RH</shortName>
            <ecNumber>2.7.7.49</ecNumber>
            <ecNumber>2.7.7.7</ecNumber>
            <ecNumber>3.1.26.4</ecNumber>
        </recommendedName>
    </domain>
</protein>
<accession>P47024</accession>
<accession>D6VW70</accession>
<accession>P87192</accession>
<sequence>MATPVRGETRNVIDDNISARIQSKVKTNDTVRQTPSSLRKVSIKDEQVRQYQRNLNRFKTILNGLKAEEEKLSEADDIQMLAEKLLKLGETIDKVENRIVDLVEKIQLLETNENNNILHEHIDATGTYYLFDTLTSTNKRFYPKDCVFDYRTNNVENIPILLNNFKKFIKKYQFDDVFENDIIEIDPRENEILCKIIKEGLGESLDIMNTNTTDIFRIIDGLKKQNIEVCMVEMSELEPGEKVLVDTTCRNSALLMNKLQKLVLMEKWIFSKCCQDCPNLKDYLQEAIMGTLHESLRNSVKQRLYNIPHDVGIDHEEFLINTVIETVIDLSPIADDQIENSCMYCKSVFHCSINCKKKPNRELGLTRPISQKPIIYKVHRDNNHLSPVQNEQKSWNKTQKRSNKVYNSKKLVIIDTGSGVNITNDKTLLHNYEDSNRSTRFFGIGKNSSVSVKGYGYIKIKNGHNNTDNKCLLTYYVPEEESTIISCYDLAKKTKMVLSRKYTRLGNKIIKIKTKIVNGVIHVKMNELIERPSDDSKINAIKPTSSPGFKLNKRSITLEDAHKRMGHTGIQQIENSIKHNHYEESLDLIKEPNEFWCQTCKISKATKRNHYTGSMNNHSTDHEPGSSWCMDIFGPVSSSNADTKRYMLIMVDNNTRYCMTSTHFNKNAETILAQVRKNIQYVETQFDRKVREINSDRGTEFTNDQIEEYFISKGIHHILTSTQDHAANGRAERYIRTIITDATTLLRQSNLRVKFWEYAVTSATNIRNYLEHKSTGKLPLKAISRQPVTVRLMSFLPFGEKGIIWNHNHKKLKPSGLPSIILCKDPNSYGYKFFIPSKNKIVTSDNYTIPNYTMDGRVRNTQNINKSHQFSSDNDDEEDQIETVTNLCEALENYEDDNKPITRLEDLFTEEELSQIDSNAKYPSPSNNLEGDLDYVFSDVEESGDYDVESELSTTNNSISTDKNKILSNKDFNSELASTEISISGIDKKGLINTSHIDEDKYDEKVHRIPSIIQEKLVGSKNTIKINDENKISDRIRSKNIGSILNTGLSRCVDITDESITNKDESMHNAKPELIQEQLKKTNHETSFPKEGSIGTNVKFRNTNNEISLKTGDTSLPIKTLESINNHHSNDYSTNKVEKFEKENHHPPPIEDIVDMSDQTDMESNCQDGNNLKELKVTDKNVPTDNGTNVSPRLEQNIEASGSPVQTVNKSAFLNKEFSSLNMKRKRKRHDKNNSLTSYELERDKKRSKKNRVKLIPDNMETVSAPKIRAIYYNEAISKNPDLKEKHEYKQAYHKELQNLKDMKVFDVDVKYSRSEIPDNLIVPTNTIFTKKRNGIYKARIVCRGDTQSPDTYSVITTESLNHNHIKIFLMIANNRNMFMKTLDINHAFLYAKLEEEIYIPHPHDRRCVVKLNKALYGLKQSPKEWNDHLRQYLNGIGLKDNSYTPGLYQTEDKNLMIAVYVDDCVIAASNEQRLDEFINKLKSNFELKITGTLIDDVLDTDILGMDLVYNKRLGTIDLTLKSFINRMDKKYNEELKKIRKSSIPHMSTYKIDPKKDVLQMSEEEFRQGVLKLQQLLGELNYVRHKCRYDIEFAVKKVARLVNYPHERVFYMIYKIIQYLVRYKDIGIHYDRDCNKDKKVIAITDASVGSEYDAQSRIGVILWYGMNIFNVYSNKSTNRCVSSTEAELHAIYEGYADSETLKVTLKELGEGDNNDIVMITDSKPAIQGLNRSYQQPKEKFTWIKTEIIKEKIKEKSIKLLKITGKGNIADLLTKPVSASDFKRFIQVLKNKITSQDILASTDY</sequence>
<evidence type="ECO:0000250" key="1"/>
<evidence type="ECO:0000255" key="2"/>
<evidence type="ECO:0000255" key="3">
    <source>
        <dbReference type="PROSITE-ProRule" id="PRU00457"/>
    </source>
</evidence>
<evidence type="ECO:0000256" key="4">
    <source>
        <dbReference type="SAM" id="MobiDB-lite"/>
    </source>
</evidence>
<evidence type="ECO:0000305" key="5"/>
<proteinExistence type="inferred from homology"/>
<keyword id="KW-0064">Aspartyl protease</keyword>
<keyword id="KW-0067">ATP-binding</keyword>
<keyword id="KW-0175">Coiled coil</keyword>
<keyword id="KW-0963">Cytoplasm</keyword>
<keyword id="KW-0229">DNA integration</keyword>
<keyword id="KW-0233">DNA recombination</keyword>
<keyword id="KW-0238">DNA-binding</keyword>
<keyword id="KW-0239">DNA-directed DNA polymerase</keyword>
<keyword id="KW-0255">Endonuclease</keyword>
<keyword id="KW-0378">Hydrolase</keyword>
<keyword id="KW-0460">Magnesium</keyword>
<keyword id="KW-0479">Metal-binding</keyword>
<keyword id="KW-0511">Multifunctional enzyme</keyword>
<keyword id="KW-0540">Nuclease</keyword>
<keyword id="KW-0547">Nucleotide-binding</keyword>
<keyword id="KW-0548">Nucleotidyltransferase</keyword>
<keyword id="KW-0539">Nucleus</keyword>
<keyword id="KW-0645">Protease</keyword>
<keyword id="KW-1185">Reference proteome</keyword>
<keyword id="KW-0688">Ribosomal frameshifting</keyword>
<keyword id="KW-0694">RNA-binding</keyword>
<keyword id="KW-0695">RNA-directed DNA polymerase</keyword>
<keyword id="KW-0808">Transferase</keyword>
<keyword id="KW-0814">Transposable element</keyword>
<keyword id="KW-0815">Transposition</keyword>
<keyword id="KW-1188">Viral release from host cell</keyword>
<keyword id="KW-0917">Virion maturation</keyword>
<keyword id="KW-0862">Zinc</keyword>
<keyword id="KW-0863">Zinc-finger</keyword>
<dbReference type="EC" id="3.4.23.-"/>
<dbReference type="EC" id="2.7.7.49"/>
<dbReference type="EC" id="2.7.7.7"/>
<dbReference type="EC" id="3.1.26.4"/>
<dbReference type="EMBL" id="X67284">
    <property type="status" value="NOT_ANNOTATED_CDS"/>
    <property type="molecule type" value="Genomic_DNA"/>
</dbReference>
<dbReference type="EMBL" id="Z49389">
    <property type="protein sequence ID" value="CAA89409.1"/>
    <property type="status" value="ALT_SEQ"/>
    <property type="molecule type" value="Genomic_DNA"/>
</dbReference>
<dbReference type="EMBL" id="BK006943">
    <property type="protein sequence ID" value="DAA08686.2"/>
    <property type="status" value="ALT_FRAME"/>
    <property type="molecule type" value="Genomic_DNA"/>
</dbReference>
<dbReference type="PIR" id="S31262">
    <property type="entry name" value="S31262"/>
</dbReference>
<dbReference type="PIR" id="S56894">
    <property type="entry name" value="S56894"/>
</dbReference>
<dbReference type="RefSeq" id="NP_012421.2">
    <property type="nucleotide sequence ID" value="NM_001181546.3"/>
</dbReference>
<dbReference type="BioGRID" id="33642">
    <property type="interactions" value="20"/>
</dbReference>
<dbReference type="FunCoup" id="P47024">
    <property type="interactions" value="14"/>
</dbReference>
<dbReference type="IntAct" id="P47024">
    <property type="interactions" value="6"/>
</dbReference>
<dbReference type="MINT" id="P47024"/>
<dbReference type="GlyGen" id="P47024">
    <property type="glycosylation" value="1 site"/>
</dbReference>
<dbReference type="PeptideAtlas" id="P47024"/>
<dbReference type="GeneID" id="853330"/>
<dbReference type="KEGG" id="sce:YJL113W"/>
<dbReference type="AGR" id="SGD:S000003649"/>
<dbReference type="SGD" id="S000003649">
    <property type="gene designation" value="YJL113W"/>
</dbReference>
<dbReference type="InParanoid" id="P47024"/>
<dbReference type="OrthoDB" id="4068312at2759"/>
<dbReference type="BioGRID-ORCS" id="853330">
    <property type="hits" value="0 hits in 10 CRISPR screens"/>
</dbReference>
<dbReference type="Proteomes" id="UP000002311">
    <property type="component" value="Chromosome X"/>
</dbReference>
<dbReference type="RNAct" id="P47024">
    <property type="molecule type" value="protein"/>
</dbReference>
<dbReference type="GO" id="GO:0005739">
    <property type="term" value="C:mitochondrion"/>
    <property type="evidence" value="ECO:0007005"/>
    <property type="project" value="SGD"/>
</dbReference>
<dbReference type="GO" id="GO:0005634">
    <property type="term" value="C:nucleus"/>
    <property type="evidence" value="ECO:0000314"/>
    <property type="project" value="SGD"/>
</dbReference>
<dbReference type="GO" id="GO:0004190">
    <property type="term" value="F:aspartic-type endopeptidase activity"/>
    <property type="evidence" value="ECO:0007669"/>
    <property type="project" value="UniProtKB-KW"/>
</dbReference>
<dbReference type="GO" id="GO:0005524">
    <property type="term" value="F:ATP binding"/>
    <property type="evidence" value="ECO:0007669"/>
    <property type="project" value="UniProtKB-KW"/>
</dbReference>
<dbReference type="GO" id="GO:0003677">
    <property type="term" value="F:DNA binding"/>
    <property type="evidence" value="ECO:0007669"/>
    <property type="project" value="UniProtKB-KW"/>
</dbReference>
<dbReference type="GO" id="GO:0003887">
    <property type="term" value="F:DNA-directed DNA polymerase activity"/>
    <property type="evidence" value="ECO:0007669"/>
    <property type="project" value="UniProtKB-KW"/>
</dbReference>
<dbReference type="GO" id="GO:0003723">
    <property type="term" value="F:RNA binding"/>
    <property type="evidence" value="ECO:0007669"/>
    <property type="project" value="UniProtKB-KW"/>
</dbReference>
<dbReference type="GO" id="GO:0003964">
    <property type="term" value="F:RNA-directed DNA polymerase activity"/>
    <property type="evidence" value="ECO:0007669"/>
    <property type="project" value="UniProtKB-KW"/>
</dbReference>
<dbReference type="GO" id="GO:0004523">
    <property type="term" value="F:RNA-DNA hybrid ribonuclease activity"/>
    <property type="evidence" value="ECO:0007669"/>
    <property type="project" value="UniProtKB-EC"/>
</dbReference>
<dbReference type="GO" id="GO:0008270">
    <property type="term" value="F:zinc ion binding"/>
    <property type="evidence" value="ECO:0007669"/>
    <property type="project" value="UniProtKB-KW"/>
</dbReference>
<dbReference type="GO" id="GO:0015074">
    <property type="term" value="P:DNA integration"/>
    <property type="evidence" value="ECO:0007669"/>
    <property type="project" value="UniProtKB-KW"/>
</dbReference>
<dbReference type="GO" id="GO:0006310">
    <property type="term" value="P:DNA recombination"/>
    <property type="evidence" value="ECO:0007669"/>
    <property type="project" value="UniProtKB-KW"/>
</dbReference>
<dbReference type="GO" id="GO:0006508">
    <property type="term" value="P:proteolysis"/>
    <property type="evidence" value="ECO:0007669"/>
    <property type="project" value="UniProtKB-KW"/>
</dbReference>
<dbReference type="GO" id="GO:0032196">
    <property type="term" value="P:transposition"/>
    <property type="evidence" value="ECO:0007669"/>
    <property type="project" value="UniProtKB-KW"/>
</dbReference>
<dbReference type="GO" id="GO:0075523">
    <property type="term" value="P:viral translational frameshifting"/>
    <property type="evidence" value="ECO:0007669"/>
    <property type="project" value="UniProtKB-KW"/>
</dbReference>
<dbReference type="CDD" id="cd09272">
    <property type="entry name" value="RNase_HI_RT_Ty1"/>
    <property type="match status" value="1"/>
</dbReference>
<dbReference type="Gene3D" id="3.30.420.10">
    <property type="entry name" value="Ribonuclease H-like superfamily/Ribonuclease H"/>
    <property type="match status" value="2"/>
</dbReference>
<dbReference type="InterPro" id="IPR043502">
    <property type="entry name" value="DNA/RNA_pol_sf"/>
</dbReference>
<dbReference type="InterPro" id="IPR001584">
    <property type="entry name" value="Integrase_cat-core"/>
</dbReference>
<dbReference type="InterPro" id="IPR054722">
    <property type="entry name" value="PolX-like_BBD"/>
</dbReference>
<dbReference type="InterPro" id="IPR039537">
    <property type="entry name" value="Retrotran_Ty1/copia-like"/>
</dbReference>
<dbReference type="InterPro" id="IPR012337">
    <property type="entry name" value="RNaseH-like_sf"/>
</dbReference>
<dbReference type="InterPro" id="IPR036397">
    <property type="entry name" value="RNaseH_sf"/>
</dbReference>
<dbReference type="InterPro" id="IPR013103">
    <property type="entry name" value="RVT_2"/>
</dbReference>
<dbReference type="PANTHER" id="PTHR42648">
    <property type="entry name" value="TRANSPOSASE, PUTATIVE-RELATED"/>
    <property type="match status" value="1"/>
</dbReference>
<dbReference type="PANTHER" id="PTHR42648:SF11">
    <property type="entry name" value="TRANSPOSON TY4-P GAG-POL POLYPROTEIN"/>
    <property type="match status" value="1"/>
</dbReference>
<dbReference type="Pfam" id="PF22936">
    <property type="entry name" value="Pol_BBD"/>
    <property type="match status" value="1"/>
</dbReference>
<dbReference type="Pfam" id="PF00665">
    <property type="entry name" value="rve"/>
    <property type="match status" value="1"/>
</dbReference>
<dbReference type="Pfam" id="PF07727">
    <property type="entry name" value="RVT_2"/>
    <property type="match status" value="1"/>
</dbReference>
<dbReference type="SUPFAM" id="SSF56672">
    <property type="entry name" value="DNA/RNA polymerases"/>
    <property type="match status" value="1"/>
</dbReference>
<dbReference type="SUPFAM" id="SSF53098">
    <property type="entry name" value="Ribonuclease H-like"/>
    <property type="match status" value="1"/>
</dbReference>
<dbReference type="PROSITE" id="PS50994">
    <property type="entry name" value="INTEGRASE"/>
    <property type="match status" value="1"/>
</dbReference>
<comment type="function">
    <text evidence="1">Capsid protein (CA) is the structural component of the virus-like particle (VLP), forming the shell that encapsulates the retrotransposons dimeric RNA genome.</text>
</comment>
<comment type="function">
    <text evidence="1">The aspartyl protease (PR) mediates the proteolytic cleavages of the Gag and Gag-Pol polyproteins after assembly of the VLP.</text>
</comment>
<comment type="function">
    <text evidence="1">Reverse transcriptase/ribonuclease H (RT) is a multifunctional enzyme that catalyzes the conversion of the retro-elements RNA genome into dsDNA within the VLP. The enzyme displays a DNA polymerase activity that can copy either DNA or RNA templates, and a ribonuclease H (RNase H) activity that cleaves the RNA strand of RNA-DNA heteroduplexes during plus-strand synthesis and hydrolyzes RNA primers. The conversion leads to a linear dsDNA copy of the retrotransposon that includes long terminal repeats (LTRs) at both ends (By similarity).</text>
</comment>
<comment type="function">
    <text evidence="1">Integrase (IN) targets the VLP to the nucleus, where a subparticle preintegration complex (PIC) containing at least integrase and the newly synthesized dsDNA copy of the retrotransposon must transit the nuclear membrane. Once in the nucleus, integrase performs the integration of the dsDNA into the host genome (By similarity).</text>
</comment>
<comment type="catalytic activity">
    <reaction>
        <text>DNA(n) + a 2'-deoxyribonucleoside 5'-triphosphate = DNA(n+1) + diphosphate</text>
        <dbReference type="Rhea" id="RHEA:22508"/>
        <dbReference type="Rhea" id="RHEA-COMP:17339"/>
        <dbReference type="Rhea" id="RHEA-COMP:17340"/>
        <dbReference type="ChEBI" id="CHEBI:33019"/>
        <dbReference type="ChEBI" id="CHEBI:61560"/>
        <dbReference type="ChEBI" id="CHEBI:173112"/>
        <dbReference type="EC" id="2.7.7.49"/>
    </reaction>
</comment>
<comment type="catalytic activity">
    <reaction>
        <text>DNA(n) + a 2'-deoxyribonucleoside 5'-triphosphate = DNA(n+1) + diphosphate</text>
        <dbReference type="Rhea" id="RHEA:22508"/>
        <dbReference type="Rhea" id="RHEA-COMP:17339"/>
        <dbReference type="Rhea" id="RHEA-COMP:17340"/>
        <dbReference type="ChEBI" id="CHEBI:33019"/>
        <dbReference type="ChEBI" id="CHEBI:61560"/>
        <dbReference type="ChEBI" id="CHEBI:173112"/>
        <dbReference type="EC" id="2.7.7.7"/>
    </reaction>
</comment>
<comment type="catalytic activity">
    <reaction>
        <text>Endonucleolytic cleavage to 5'-phosphomonoester.</text>
        <dbReference type="EC" id="3.1.26.4"/>
    </reaction>
</comment>
<comment type="subunit">
    <text evidence="1">The protease is a homodimer, whose active site consists of two apposed aspartic acid residues.</text>
</comment>
<comment type="subcellular location">
    <subcellularLocation>
        <location>Cytoplasm</location>
    </subcellularLocation>
    <subcellularLocation>
        <location evidence="1">Nucleus</location>
    </subcellularLocation>
</comment>
<comment type="alternative products">
    <event type="ribosomal frameshifting"/>
    <isoform>
        <id>P47024-1</id>
        <name>Transposon Ty4-J Gag-Pol polyprotein</name>
        <sequence type="displayed"/>
    </isoform>
    <isoform>
        <id>P47023-1</id>
        <name>Transposon Ty4-J Gag polyprotein</name>
        <sequence type="external"/>
    </isoform>
    <text>The Gag-Pol polyprotein is generated by a +1 ribosomal frameshift.</text>
</comment>
<comment type="domain">
    <text evidence="1">Integrase core domain contains the D-x(n)-D-x(35)-E motif, named for the phylogenetically conserved glutamic acid and aspartic acid residues and the invariant 35 amino acid spacing between the second and third acidic residues. Each acidic residue of the D,D(35)E motif is independently essential for the 3'-processing and strand transfer activities of purified integrase protein (By similarity).</text>
</comment>
<comment type="PTM">
    <text evidence="1 5">Proteolytically processed into capsid protein (CA), Ty4 protease (PR), integrase (IN) and reverse transcriptase/ribonuclease H (RT) proteins (Probable). Initially, virus-like particles (VLPs) are composed of the structural unprocessed proteins Gag and Gag-Pol, and also contain the host initiator methionine tRNA (tRNA(i)-Met) which serves as a primer for minus-strand DNA synthesis, and a dimer of genomic Ty RNA. Processing of the polyproteins occurs within the particle and proceeds by an ordered pathway, called maturation. First, the protease (PR) is released by autocatalytic cleavage of the Gag-Pol polyprotein, and this cleavage is a prerequisite for subsequent processing at the remaining sites to release the mature structural and catalytic proteins. Maturation takes place prior to the RT reaction and is required to produce transposition-competent VLPs (By similarity).</text>
</comment>
<comment type="miscellaneous">
    <text>Retrotransposons are mobile genetic entities that are able to replicate via an RNA intermediate and a reverse transcription step. In contrast to retroviruses, retrotransposons are non-infectious, lack an envelope and remain intracellular. Ty4 retrotransposons belong to the copia elements (pseudoviridae).</text>
</comment>
<comment type="miscellaneous">
    <molecule>Isoform Transposon Ty4-J Gag-Pol polyprotein</molecule>
    <text>Produced by +1 ribosomal frameshifting between codon Leu-363 and Gly-364 of the YJL114W ORF.</text>
</comment>
<comment type="sequence caution" evidence="5">
    <conflict type="erroneous gene model prediction">
        <sequence resource="EMBL-CDS" id="CAA89409"/>
    </conflict>
</comment>
<comment type="sequence caution" evidence="5">
    <conflict type="frameshift">
        <sequence resource="EMBL-CDS" id="DAA08686"/>
    </conflict>
</comment>
<organism>
    <name type="scientific">Saccharomyces cerevisiae (strain ATCC 204508 / S288c)</name>
    <name type="common">Baker's yeast</name>
    <dbReference type="NCBI Taxonomy" id="559292"/>
    <lineage>
        <taxon>Eukaryota</taxon>
        <taxon>Fungi</taxon>
        <taxon>Dikarya</taxon>
        <taxon>Ascomycota</taxon>
        <taxon>Saccharomycotina</taxon>
        <taxon>Saccharomycetes</taxon>
        <taxon>Saccharomycetales</taxon>
        <taxon>Saccharomycetaceae</taxon>
        <taxon>Saccharomyces</taxon>
    </lineage>
</organism>
<name>YJ41B_YEAST</name>
<gene>
    <name type="primary">TY4B-J</name>
    <name type="synonym">YJLWTy4-1 POL</name>
    <name type="ordered locus">YJL113W</name>
    <name type="ORF">J0780</name>
</gene>